<keyword id="KW-0010">Activator</keyword>
<keyword id="KW-0175">Coiled coil</keyword>
<keyword id="KW-0539">Nucleus</keyword>
<keyword id="KW-1185">Reference proteome</keyword>
<keyword id="KW-0804">Transcription</keyword>
<keyword id="KW-0805">Transcription regulation</keyword>
<proteinExistence type="evidence at transcript level"/>
<reference key="1">
    <citation type="submission" date="2005-04" db="EMBL/GenBank/DDBJ databases">
        <authorList>
            <consortium name="NIH - Zebrafish Gene Collection (ZGC) project"/>
        </authorList>
    </citation>
    <scope>NUCLEOTIDE SEQUENCE [LARGE SCALE MRNA]</scope>
    <source>
        <tissue>Embryo</tissue>
    </source>
</reference>
<gene>
    <name type="primary">med4</name>
    <name type="ORF">zgc:110646</name>
</gene>
<organism>
    <name type="scientific">Danio rerio</name>
    <name type="common">Zebrafish</name>
    <name type="synonym">Brachydanio rerio</name>
    <dbReference type="NCBI Taxonomy" id="7955"/>
    <lineage>
        <taxon>Eukaryota</taxon>
        <taxon>Metazoa</taxon>
        <taxon>Chordata</taxon>
        <taxon>Craniata</taxon>
        <taxon>Vertebrata</taxon>
        <taxon>Euteleostomi</taxon>
        <taxon>Actinopterygii</taxon>
        <taxon>Neopterygii</taxon>
        <taxon>Teleostei</taxon>
        <taxon>Ostariophysi</taxon>
        <taxon>Cypriniformes</taxon>
        <taxon>Danionidae</taxon>
        <taxon>Danioninae</taxon>
        <taxon>Danio</taxon>
    </lineage>
</organism>
<comment type="function">
    <text evidence="1">Component of the Mediator complex, a coactivator involved in the regulated transcription of nearly all RNA polymerase II-dependent genes. Mediator functions as a bridge to convey information from gene-specific regulatory proteins to the basal RNA polymerase II transcription machinery. Mediator is recruited to promoters by direct interactions with regulatory proteins and serves as a scaffold for the assembly of a functional preinitiation complex with RNA polymerase II and the general transcription factors (By similarity).</text>
</comment>
<comment type="subunit">
    <text evidence="1">Component of the Mediator complex.</text>
</comment>
<comment type="subcellular location">
    <subcellularLocation>
        <location evidence="1">Nucleus</location>
    </subcellularLocation>
</comment>
<comment type="similarity">
    <text evidence="4">Belongs to the Mediator complex subunit 4 family.</text>
</comment>
<dbReference type="EMBL" id="BC092965">
    <property type="protein sequence ID" value="AAH92965.1"/>
    <property type="molecule type" value="mRNA"/>
</dbReference>
<dbReference type="RefSeq" id="NP_001017883.1">
    <property type="nucleotide sequence ID" value="NM_001017883.1"/>
</dbReference>
<dbReference type="SMR" id="Q561X3"/>
<dbReference type="FunCoup" id="Q561X3">
    <property type="interactions" value="2259"/>
</dbReference>
<dbReference type="STRING" id="7955.ENSDARP00000060839"/>
<dbReference type="PaxDb" id="7955-ENSDARP00000060839"/>
<dbReference type="GeneID" id="550582"/>
<dbReference type="KEGG" id="dre:550582"/>
<dbReference type="AGR" id="ZFIN:ZDB-GENE-050417-438"/>
<dbReference type="CTD" id="29079"/>
<dbReference type="ZFIN" id="ZDB-GENE-050417-438">
    <property type="gene designation" value="med4"/>
</dbReference>
<dbReference type="eggNOG" id="KOG4552">
    <property type="taxonomic scope" value="Eukaryota"/>
</dbReference>
<dbReference type="InParanoid" id="Q561X3"/>
<dbReference type="OrthoDB" id="1929813at2759"/>
<dbReference type="PhylomeDB" id="Q561X3"/>
<dbReference type="PRO" id="PR:Q561X3"/>
<dbReference type="Proteomes" id="UP000000437">
    <property type="component" value="Chromosome 9"/>
</dbReference>
<dbReference type="GO" id="GO:0070847">
    <property type="term" value="C:core mediator complex"/>
    <property type="evidence" value="ECO:0000318"/>
    <property type="project" value="GO_Central"/>
</dbReference>
<dbReference type="GO" id="GO:0016592">
    <property type="term" value="C:mediator complex"/>
    <property type="evidence" value="ECO:0007669"/>
    <property type="project" value="InterPro"/>
</dbReference>
<dbReference type="GO" id="GO:0003712">
    <property type="term" value="F:transcription coregulator activity"/>
    <property type="evidence" value="ECO:0000318"/>
    <property type="project" value="GO_Central"/>
</dbReference>
<dbReference type="GO" id="GO:0006357">
    <property type="term" value="P:regulation of transcription by RNA polymerase II"/>
    <property type="evidence" value="ECO:0000318"/>
    <property type="project" value="GO_Central"/>
</dbReference>
<dbReference type="InterPro" id="IPR019258">
    <property type="entry name" value="Mediator_Med4"/>
</dbReference>
<dbReference type="PANTHER" id="PTHR13208">
    <property type="entry name" value="MEDIATOR OF RNA POLYMERASE II TRANSCRIPTION SUBUNIT 4"/>
    <property type="match status" value="1"/>
</dbReference>
<dbReference type="PANTHER" id="PTHR13208:SF2">
    <property type="entry name" value="MEDIATOR OF RNA POLYMERASE II TRANSCRIPTION SUBUNIT 4"/>
    <property type="match status" value="1"/>
</dbReference>
<dbReference type="Pfam" id="PF10018">
    <property type="entry name" value="Med4"/>
    <property type="match status" value="1"/>
</dbReference>
<accession>Q561X3</accession>
<feature type="chain" id="PRO_0000302065" description="Mediator of RNA polymerase II transcription subunit 4">
    <location>
        <begin position="1"/>
        <end position="254"/>
    </location>
</feature>
<feature type="region of interest" description="Disordered" evidence="3">
    <location>
        <begin position="215"/>
        <end position="254"/>
    </location>
</feature>
<feature type="coiled-coil region" evidence="2">
    <location>
        <begin position="72"/>
        <end position="114"/>
    </location>
</feature>
<feature type="compositionally biased region" description="Low complexity" evidence="3">
    <location>
        <begin position="243"/>
        <end position="254"/>
    </location>
</feature>
<protein>
    <recommendedName>
        <fullName>Mediator of RNA polymerase II transcription subunit 4</fullName>
    </recommendedName>
    <alternativeName>
        <fullName>Mediator complex subunit 4</fullName>
    </alternativeName>
</protein>
<name>MED4_DANRE</name>
<evidence type="ECO:0000250" key="1"/>
<evidence type="ECO:0000255" key="2"/>
<evidence type="ECO:0000256" key="3">
    <source>
        <dbReference type="SAM" id="MobiDB-lite"/>
    </source>
</evidence>
<evidence type="ECO:0000305" key="4"/>
<sequence>MAAAAADKSTKERLLSTLDDLEVLSRELIEMLALSRSQKLPPPGEDTLILELLIQRDKEFQELMQTALEQGRVHQEMQSLEKEVEKRDSDIQQLQKQLKEAEHILATAVYQAKEKLKSIDKARKGSISSKEIIKYAHRISASNAVCAPLNWVPGDPRRPYPTDLEMRSGMLGNMSNMSTNGVNGHLPGDALAAGRLPDVLTPQYPWQSTDVSMGILPPHHGNDFGLEPPGHNKENEDDVEAMSTDSSSSSSDSD</sequence>